<protein>
    <recommendedName>
        <fullName evidence="1">Endoribonuclease YbeY</fullName>
        <ecNumber evidence="1">3.1.-.-</ecNumber>
    </recommendedName>
</protein>
<organism>
    <name type="scientific">Pseudoalteromonas atlantica (strain T6c / ATCC BAA-1087)</name>
    <dbReference type="NCBI Taxonomy" id="3042615"/>
    <lineage>
        <taxon>Bacteria</taxon>
        <taxon>Pseudomonadati</taxon>
        <taxon>Pseudomonadota</taxon>
        <taxon>Gammaproteobacteria</taxon>
        <taxon>Alteromonadales</taxon>
        <taxon>Alteromonadaceae</taxon>
        <taxon>Paraglaciecola</taxon>
    </lineage>
</organism>
<keyword id="KW-0963">Cytoplasm</keyword>
<keyword id="KW-0255">Endonuclease</keyword>
<keyword id="KW-0378">Hydrolase</keyword>
<keyword id="KW-0479">Metal-binding</keyword>
<keyword id="KW-0540">Nuclease</keyword>
<keyword id="KW-0690">Ribosome biogenesis</keyword>
<keyword id="KW-0698">rRNA processing</keyword>
<keyword id="KW-0862">Zinc</keyword>
<evidence type="ECO:0000255" key="1">
    <source>
        <dbReference type="HAMAP-Rule" id="MF_00009"/>
    </source>
</evidence>
<gene>
    <name evidence="1" type="primary">ybeY</name>
    <name type="ordered locus">Patl_2208</name>
</gene>
<proteinExistence type="inferred from homology"/>
<dbReference type="EC" id="3.1.-.-" evidence="1"/>
<dbReference type="EMBL" id="CP000388">
    <property type="protein sequence ID" value="ABG40726.1"/>
    <property type="molecule type" value="Genomic_DNA"/>
</dbReference>
<dbReference type="RefSeq" id="WP_011575009.1">
    <property type="nucleotide sequence ID" value="NC_008228.1"/>
</dbReference>
<dbReference type="SMR" id="Q15TR2"/>
<dbReference type="STRING" id="342610.Patl_2208"/>
<dbReference type="KEGG" id="pat:Patl_2208"/>
<dbReference type="eggNOG" id="COG0319">
    <property type="taxonomic scope" value="Bacteria"/>
</dbReference>
<dbReference type="HOGENOM" id="CLU_106710_0_1_6"/>
<dbReference type="OrthoDB" id="9807740at2"/>
<dbReference type="Proteomes" id="UP000001981">
    <property type="component" value="Chromosome"/>
</dbReference>
<dbReference type="GO" id="GO:0005737">
    <property type="term" value="C:cytoplasm"/>
    <property type="evidence" value="ECO:0007669"/>
    <property type="project" value="UniProtKB-SubCell"/>
</dbReference>
<dbReference type="GO" id="GO:0004222">
    <property type="term" value="F:metalloendopeptidase activity"/>
    <property type="evidence" value="ECO:0007669"/>
    <property type="project" value="InterPro"/>
</dbReference>
<dbReference type="GO" id="GO:0004521">
    <property type="term" value="F:RNA endonuclease activity"/>
    <property type="evidence" value="ECO:0007669"/>
    <property type="project" value="UniProtKB-UniRule"/>
</dbReference>
<dbReference type="GO" id="GO:0008270">
    <property type="term" value="F:zinc ion binding"/>
    <property type="evidence" value="ECO:0007669"/>
    <property type="project" value="UniProtKB-UniRule"/>
</dbReference>
<dbReference type="GO" id="GO:0006364">
    <property type="term" value="P:rRNA processing"/>
    <property type="evidence" value="ECO:0007669"/>
    <property type="project" value="UniProtKB-UniRule"/>
</dbReference>
<dbReference type="Gene3D" id="3.40.390.30">
    <property type="entry name" value="Metalloproteases ('zincins'), catalytic domain"/>
    <property type="match status" value="1"/>
</dbReference>
<dbReference type="HAMAP" id="MF_00009">
    <property type="entry name" value="Endoribonucl_YbeY"/>
    <property type="match status" value="1"/>
</dbReference>
<dbReference type="InterPro" id="IPR023091">
    <property type="entry name" value="MetalPrtase_cat_dom_sf_prd"/>
</dbReference>
<dbReference type="InterPro" id="IPR002036">
    <property type="entry name" value="YbeY"/>
</dbReference>
<dbReference type="InterPro" id="IPR020549">
    <property type="entry name" value="YbeY_CS"/>
</dbReference>
<dbReference type="NCBIfam" id="TIGR00043">
    <property type="entry name" value="rRNA maturation RNase YbeY"/>
    <property type="match status" value="1"/>
</dbReference>
<dbReference type="PANTHER" id="PTHR46986">
    <property type="entry name" value="ENDORIBONUCLEASE YBEY, CHLOROPLASTIC"/>
    <property type="match status" value="1"/>
</dbReference>
<dbReference type="PANTHER" id="PTHR46986:SF1">
    <property type="entry name" value="ENDORIBONUCLEASE YBEY, CHLOROPLASTIC"/>
    <property type="match status" value="1"/>
</dbReference>
<dbReference type="Pfam" id="PF02130">
    <property type="entry name" value="YbeY"/>
    <property type="match status" value="1"/>
</dbReference>
<dbReference type="SUPFAM" id="SSF55486">
    <property type="entry name" value="Metalloproteases ('zincins'), catalytic domain"/>
    <property type="match status" value="1"/>
</dbReference>
<dbReference type="PROSITE" id="PS01306">
    <property type="entry name" value="UPF0054"/>
    <property type="match status" value="1"/>
</dbReference>
<reference key="1">
    <citation type="submission" date="2006-06" db="EMBL/GenBank/DDBJ databases">
        <title>Complete sequence of Pseudoalteromonas atlantica T6c.</title>
        <authorList>
            <consortium name="US DOE Joint Genome Institute"/>
            <person name="Copeland A."/>
            <person name="Lucas S."/>
            <person name="Lapidus A."/>
            <person name="Barry K."/>
            <person name="Detter J.C."/>
            <person name="Glavina del Rio T."/>
            <person name="Hammon N."/>
            <person name="Israni S."/>
            <person name="Dalin E."/>
            <person name="Tice H."/>
            <person name="Pitluck S."/>
            <person name="Saunders E."/>
            <person name="Brettin T."/>
            <person name="Bruce D."/>
            <person name="Han C."/>
            <person name="Tapia R."/>
            <person name="Gilna P."/>
            <person name="Schmutz J."/>
            <person name="Larimer F."/>
            <person name="Land M."/>
            <person name="Hauser L."/>
            <person name="Kyrpides N."/>
            <person name="Kim E."/>
            <person name="Karls A.C."/>
            <person name="Bartlett D."/>
            <person name="Higgins B.P."/>
            <person name="Richardson P."/>
        </authorList>
    </citation>
    <scope>NUCLEOTIDE SEQUENCE [LARGE SCALE GENOMIC DNA]</scope>
    <source>
        <strain>T6c / ATCC BAA-1087</strain>
    </source>
</reference>
<sequence length="152" mass="17104">MSAIVDLQVASDAANLPSADDFQRWLNAVLAHQQLSEHELTVRIVETQESQELNLTYRGKDKPTNVLSFPFEAPPGLSLNLLGDLVVCADVVAHEADEQHKKLHHHWAHMIVHGALHLLGFDHINDDEAKEMEALEVDILKQFSIDDPYQDQ</sequence>
<comment type="function">
    <text evidence="1">Single strand-specific metallo-endoribonuclease involved in late-stage 70S ribosome quality control and in maturation of the 3' terminus of the 16S rRNA.</text>
</comment>
<comment type="cofactor">
    <cofactor evidence="1">
        <name>Zn(2+)</name>
        <dbReference type="ChEBI" id="CHEBI:29105"/>
    </cofactor>
    <text evidence="1">Binds 1 zinc ion.</text>
</comment>
<comment type="subcellular location">
    <subcellularLocation>
        <location evidence="1">Cytoplasm</location>
    </subcellularLocation>
</comment>
<comment type="similarity">
    <text evidence="1">Belongs to the endoribonuclease YbeY family.</text>
</comment>
<accession>Q15TR2</accession>
<feature type="chain" id="PRO_0000284273" description="Endoribonuclease YbeY">
    <location>
        <begin position="1"/>
        <end position="152"/>
    </location>
</feature>
<feature type="binding site" evidence="1">
    <location>
        <position position="113"/>
    </location>
    <ligand>
        <name>Zn(2+)</name>
        <dbReference type="ChEBI" id="CHEBI:29105"/>
        <note>catalytic</note>
    </ligand>
</feature>
<feature type="binding site" evidence="1">
    <location>
        <position position="117"/>
    </location>
    <ligand>
        <name>Zn(2+)</name>
        <dbReference type="ChEBI" id="CHEBI:29105"/>
        <note>catalytic</note>
    </ligand>
</feature>
<feature type="binding site" evidence="1">
    <location>
        <position position="123"/>
    </location>
    <ligand>
        <name>Zn(2+)</name>
        <dbReference type="ChEBI" id="CHEBI:29105"/>
        <note>catalytic</note>
    </ligand>
</feature>
<name>YBEY_PSEA6</name>